<sequence length="335" mass="37714">MTEIYDFDKSAWDIKGSIAPIQPTTYSDGRLVPQVRVIDPGLGDRKDECFMYMFLLGVVEDSDPLGPPIGRAFGSLPLGVGRSTAKPEKLLKEATELDIVVRRTAGLNEKLVFYNNTPLTLLTPWRKVLTTGSVFNANQVCSAVNLIPLDTPQRFRVVYMSITRLSDNGYYTVPRRMLEFRSVNAVAFNLLVTLRIDKAIGPGKIIDNTEQLPEATFMVHIGNFRRKKSEVYSADYCKMKIEKMGLVFALGGIGGTSLHIRSTGKMSKTLHAQLGFKKTLCYPLMDINEDLNRLLWRSRCKIVRIQAVLQPSVPQEFRIYDDVIINDDQGLFKVL</sequence>
<protein>
    <recommendedName>
        <fullName>Matrix protein</fullName>
    </recommendedName>
</protein>
<organism>
    <name type="scientific">Measles virus (strain Edmonston)</name>
    <name type="common">MeV</name>
    <name type="synonym">Subacute sclerose panencephalitis virus</name>
    <dbReference type="NCBI Taxonomy" id="11235"/>
    <lineage>
        <taxon>Viruses</taxon>
        <taxon>Riboviria</taxon>
        <taxon>Orthornavirae</taxon>
        <taxon>Negarnaviricota</taxon>
        <taxon>Haploviricotina</taxon>
        <taxon>Monjiviricetes</taxon>
        <taxon>Mononegavirales</taxon>
        <taxon>Paramyxoviridae</taxon>
        <taxon>Orthoparamyxovirinae</taxon>
        <taxon>Morbillivirus</taxon>
        <taxon>Morbillivirus hominis</taxon>
        <taxon>Measles morbillivirus</taxon>
    </lineage>
</organism>
<organismHost>
    <name type="scientific">Homo sapiens</name>
    <name type="common">Human</name>
    <dbReference type="NCBI Taxonomy" id="9606"/>
</organismHost>
<comment type="function">
    <text evidence="1">The M protein has a crucial role in virus assembly and interacts with the RNP complex as well as with the viral membrane. Associates with phosphatidylserine (PS) and phosphatidylinositol 4,5-bisphosphate (PIP2) at the plasma membrane. Interaction with PIP2 triggers matrix protein lattice polymerization. Matrix proteins induce host membrane deformation and curvature necessary for virion assembly/budding.</text>
</comment>
<comment type="subunit">
    <text evidence="1">Homodimer. Dimerization is critical for virion formation. Interacts with host ANP32B.</text>
</comment>
<comment type="subcellular location">
    <subcellularLocation>
        <location evidence="1">Virion</location>
    </subcellularLocation>
    <subcellularLocation>
        <location evidence="1">Host cell membrane</location>
    </subcellularLocation>
</comment>
<comment type="similarity">
    <text evidence="2">Belongs to the morbillivirus/respirovirus/rubulavirus M protein family.</text>
</comment>
<feature type="chain" id="PRO_0000142752" description="Matrix protein">
    <location>
        <begin position="1"/>
        <end position="335"/>
    </location>
</feature>
<name>MATRX_MEASE</name>
<keyword id="KW-1032">Host cell membrane</keyword>
<keyword id="KW-1043">Host membrane</keyword>
<keyword id="KW-0945">Host-virus interaction</keyword>
<keyword id="KW-0446">Lipid-binding</keyword>
<keyword id="KW-0472">Membrane</keyword>
<keyword id="KW-0261">Viral envelope protein</keyword>
<keyword id="KW-0468">Viral matrix protein</keyword>
<keyword id="KW-0946">Virion</keyword>
<accession>P06942</accession>
<reference key="1">
    <citation type="journal article" date="1986" name="J. Virol.">
        <title>Matrix genes of measles virus and canine distemper virus: cloning, nucleotide sequences, and deduced amino acid sequences.</title>
        <authorList>
            <person name="Bellini W.J."/>
            <person name="Englund G."/>
            <person name="Richardson C.D."/>
            <person name="Rozenblatt S."/>
            <person name="Lazzarini R.A."/>
        </authorList>
    </citation>
    <scope>NUCLEOTIDE SEQUENCE [GENOMIC RNA]</scope>
</reference>
<reference key="2">
    <citation type="journal article" date="1989" name="Virology">
        <title>Mutated and hypermutated genes of persistent measles viruses which caused lethal human brain diseases.</title>
        <authorList>
            <person name="Cattaneo R."/>
            <person name="Schmid A."/>
            <person name="Spielhofer P."/>
            <person name="Kaelin K."/>
            <person name="Baczko K."/>
            <person name="Meulen V."/>
            <person name="Pardowitz J."/>
            <person name="Flanagan S."/>
            <person name="Rima B.K."/>
            <person name="Udem S.A."/>
        </authorList>
    </citation>
    <scope>NUCLEOTIDE SEQUENCE [GENOMIC RNA]</scope>
</reference>
<dbReference type="EMBL" id="M12668">
    <property type="protein sequence ID" value="AAA66616.1"/>
    <property type="molecule type" value="Genomic_RNA"/>
</dbReference>
<dbReference type="EMBL" id="K01711">
    <property type="protein sequence ID" value="AAA75497.1"/>
    <property type="molecule type" value="Genomic_RNA"/>
</dbReference>
<dbReference type="PIR" id="A93018">
    <property type="entry name" value="MFNZMV"/>
</dbReference>
<dbReference type="SMR" id="P06942"/>
<dbReference type="Proteomes" id="UP000000833">
    <property type="component" value="Genome"/>
</dbReference>
<dbReference type="GO" id="GO:0020002">
    <property type="term" value="C:host cell plasma membrane"/>
    <property type="evidence" value="ECO:0007669"/>
    <property type="project" value="UniProtKB-SubCell"/>
</dbReference>
<dbReference type="GO" id="GO:0016020">
    <property type="term" value="C:membrane"/>
    <property type="evidence" value="ECO:0007669"/>
    <property type="project" value="UniProtKB-KW"/>
</dbReference>
<dbReference type="GO" id="GO:0019031">
    <property type="term" value="C:viral envelope"/>
    <property type="evidence" value="ECO:0007669"/>
    <property type="project" value="UniProtKB-KW"/>
</dbReference>
<dbReference type="GO" id="GO:0019013">
    <property type="term" value="C:viral nucleocapsid"/>
    <property type="evidence" value="ECO:0000314"/>
    <property type="project" value="CACAO"/>
</dbReference>
<dbReference type="GO" id="GO:0008289">
    <property type="term" value="F:lipid binding"/>
    <property type="evidence" value="ECO:0007669"/>
    <property type="project" value="UniProtKB-KW"/>
</dbReference>
<dbReference type="GO" id="GO:0039660">
    <property type="term" value="F:structural constituent of virion"/>
    <property type="evidence" value="ECO:0007669"/>
    <property type="project" value="UniProtKB-KW"/>
</dbReference>
<dbReference type="GO" id="GO:0019068">
    <property type="term" value="P:virion assembly"/>
    <property type="evidence" value="ECO:0007669"/>
    <property type="project" value="InterPro"/>
</dbReference>
<dbReference type="FunFam" id="2.70.20.50:FF:000001">
    <property type="entry name" value="Matrix protein"/>
    <property type="match status" value="1"/>
</dbReference>
<dbReference type="FunFam" id="2.70.20.60:FF:000001">
    <property type="entry name" value="Matrix protein"/>
    <property type="match status" value="1"/>
</dbReference>
<dbReference type="Gene3D" id="2.70.20.60">
    <property type="entry name" value="Viral matrix protein, C-terminal domain"/>
    <property type="match status" value="1"/>
</dbReference>
<dbReference type="Gene3D" id="2.70.20.50">
    <property type="entry name" value="Viral matrix protein, N-terminal domain"/>
    <property type="match status" value="1"/>
</dbReference>
<dbReference type="InterPro" id="IPR042539">
    <property type="entry name" value="Matrix_C"/>
</dbReference>
<dbReference type="InterPro" id="IPR042540">
    <property type="entry name" value="Matrix_N"/>
</dbReference>
<dbReference type="InterPro" id="IPR055413">
    <property type="entry name" value="Matrix_Paramyxo_C"/>
</dbReference>
<dbReference type="InterPro" id="IPR000982">
    <property type="entry name" value="Matrix_Paramyxo_N"/>
</dbReference>
<dbReference type="Pfam" id="PF23765">
    <property type="entry name" value="Matrix_Paramyxo_C"/>
    <property type="match status" value="1"/>
</dbReference>
<dbReference type="Pfam" id="PF00661">
    <property type="entry name" value="Matrix_Paramyxo_N"/>
    <property type="match status" value="1"/>
</dbReference>
<gene>
    <name type="primary">M</name>
</gene>
<proteinExistence type="inferred from homology"/>
<evidence type="ECO:0000250" key="1">
    <source>
        <dbReference type="UniProtKB" id="Q9W850"/>
    </source>
</evidence>
<evidence type="ECO:0000305" key="2"/>